<reference key="1">
    <citation type="journal article" date="2003" name="Genome Res.">
        <title>Comparative complete genome sequence analysis of the amino acid replacements responsible for the thermostability of Corynebacterium efficiens.</title>
        <authorList>
            <person name="Nishio Y."/>
            <person name="Nakamura Y."/>
            <person name="Kawarabayasi Y."/>
            <person name="Usuda Y."/>
            <person name="Kimura E."/>
            <person name="Sugimoto S."/>
            <person name="Matsui K."/>
            <person name="Yamagishi A."/>
            <person name="Kikuchi H."/>
            <person name="Ikeo K."/>
            <person name="Gojobori T."/>
        </authorList>
    </citation>
    <scope>NUCLEOTIDE SEQUENCE [LARGE SCALE GENOMIC DNA]</scope>
    <source>
        <strain>DSM 44549 / YS-314 / AJ 12310 / JCM 11189 / NBRC 100395</strain>
    </source>
</reference>
<comment type="function">
    <text evidence="1">Catalyzes the NADPH-dependent reduction of L-glutamate 5-phosphate into L-glutamate 5-semialdehyde and phosphate. The product spontaneously undergoes cyclization to form 1-pyrroline-5-carboxylate.</text>
</comment>
<comment type="catalytic activity">
    <reaction evidence="1">
        <text>L-glutamate 5-semialdehyde + phosphate + NADP(+) = L-glutamyl 5-phosphate + NADPH + H(+)</text>
        <dbReference type="Rhea" id="RHEA:19541"/>
        <dbReference type="ChEBI" id="CHEBI:15378"/>
        <dbReference type="ChEBI" id="CHEBI:43474"/>
        <dbReference type="ChEBI" id="CHEBI:57783"/>
        <dbReference type="ChEBI" id="CHEBI:58066"/>
        <dbReference type="ChEBI" id="CHEBI:58274"/>
        <dbReference type="ChEBI" id="CHEBI:58349"/>
        <dbReference type="EC" id="1.2.1.41"/>
    </reaction>
</comment>
<comment type="pathway">
    <text evidence="1">Amino-acid biosynthesis; L-proline biosynthesis; L-glutamate 5-semialdehyde from L-glutamate: step 2/2.</text>
</comment>
<comment type="subcellular location">
    <subcellularLocation>
        <location evidence="1">Cytoplasm</location>
    </subcellularLocation>
</comment>
<comment type="similarity">
    <text evidence="1">Belongs to the gamma-glutamyl phosphate reductase family.</text>
</comment>
<name>PROA_COREF</name>
<organism>
    <name type="scientific">Corynebacterium efficiens (strain DSM 44549 / YS-314 / AJ 12310 / JCM 11189 / NBRC 100395)</name>
    <dbReference type="NCBI Taxonomy" id="196164"/>
    <lineage>
        <taxon>Bacteria</taxon>
        <taxon>Bacillati</taxon>
        <taxon>Actinomycetota</taxon>
        <taxon>Actinomycetes</taxon>
        <taxon>Mycobacteriales</taxon>
        <taxon>Corynebacteriaceae</taxon>
        <taxon>Corynebacterium</taxon>
    </lineage>
</organism>
<protein>
    <recommendedName>
        <fullName evidence="1">Gamma-glutamyl phosphate reductase</fullName>
        <shortName evidence="1">GPR</shortName>
        <ecNumber evidence="1">1.2.1.41</ecNumber>
    </recommendedName>
    <alternativeName>
        <fullName evidence="1">Glutamate-5-semialdehyde dehydrogenase</fullName>
    </alternativeName>
    <alternativeName>
        <fullName evidence="1">Glutamyl-gamma-semialdehyde dehydrogenase</fullName>
        <shortName evidence="1">GSA dehydrogenase</shortName>
    </alternativeName>
</protein>
<dbReference type="EC" id="1.2.1.41" evidence="1"/>
<dbReference type="EMBL" id="BA000035">
    <property type="protein sequence ID" value="BAC19070.1"/>
    <property type="molecule type" value="Genomic_DNA"/>
</dbReference>
<dbReference type="RefSeq" id="WP_006768265.1">
    <property type="nucleotide sequence ID" value="NC_004369.1"/>
</dbReference>
<dbReference type="SMR" id="Q8FN87"/>
<dbReference type="STRING" id="196164.gene:10742691"/>
<dbReference type="KEGG" id="cef:CE2260"/>
<dbReference type="eggNOG" id="COG0014">
    <property type="taxonomic scope" value="Bacteria"/>
</dbReference>
<dbReference type="HOGENOM" id="CLU_030231_0_0_11"/>
<dbReference type="OrthoDB" id="9809970at2"/>
<dbReference type="UniPathway" id="UPA00098">
    <property type="reaction ID" value="UER00360"/>
</dbReference>
<dbReference type="Proteomes" id="UP000001409">
    <property type="component" value="Chromosome"/>
</dbReference>
<dbReference type="GO" id="GO:0005737">
    <property type="term" value="C:cytoplasm"/>
    <property type="evidence" value="ECO:0007669"/>
    <property type="project" value="UniProtKB-SubCell"/>
</dbReference>
<dbReference type="GO" id="GO:0004350">
    <property type="term" value="F:glutamate-5-semialdehyde dehydrogenase activity"/>
    <property type="evidence" value="ECO:0007669"/>
    <property type="project" value="UniProtKB-UniRule"/>
</dbReference>
<dbReference type="GO" id="GO:0050661">
    <property type="term" value="F:NADP binding"/>
    <property type="evidence" value="ECO:0007669"/>
    <property type="project" value="InterPro"/>
</dbReference>
<dbReference type="GO" id="GO:0055129">
    <property type="term" value="P:L-proline biosynthetic process"/>
    <property type="evidence" value="ECO:0007669"/>
    <property type="project" value="UniProtKB-UniRule"/>
</dbReference>
<dbReference type="CDD" id="cd07079">
    <property type="entry name" value="ALDH_F18-19_ProA-GPR"/>
    <property type="match status" value="1"/>
</dbReference>
<dbReference type="Gene3D" id="3.40.605.10">
    <property type="entry name" value="Aldehyde Dehydrogenase, Chain A, domain 1"/>
    <property type="match status" value="1"/>
</dbReference>
<dbReference type="Gene3D" id="3.40.309.10">
    <property type="entry name" value="Aldehyde Dehydrogenase, Chain A, domain 2"/>
    <property type="match status" value="1"/>
</dbReference>
<dbReference type="HAMAP" id="MF_00412">
    <property type="entry name" value="ProA"/>
    <property type="match status" value="1"/>
</dbReference>
<dbReference type="InterPro" id="IPR016161">
    <property type="entry name" value="Ald_DH/histidinol_DH"/>
</dbReference>
<dbReference type="InterPro" id="IPR016163">
    <property type="entry name" value="Ald_DH_C"/>
</dbReference>
<dbReference type="InterPro" id="IPR016162">
    <property type="entry name" value="Ald_DH_N"/>
</dbReference>
<dbReference type="InterPro" id="IPR015590">
    <property type="entry name" value="Aldehyde_DH_dom"/>
</dbReference>
<dbReference type="InterPro" id="IPR020593">
    <property type="entry name" value="G-glutamylP_reductase_CS"/>
</dbReference>
<dbReference type="InterPro" id="IPR012134">
    <property type="entry name" value="Glu-5-SA_DH"/>
</dbReference>
<dbReference type="InterPro" id="IPR000965">
    <property type="entry name" value="GPR_dom"/>
</dbReference>
<dbReference type="NCBIfam" id="NF001221">
    <property type="entry name" value="PRK00197.1"/>
    <property type="match status" value="1"/>
</dbReference>
<dbReference type="NCBIfam" id="TIGR00407">
    <property type="entry name" value="proA"/>
    <property type="match status" value="1"/>
</dbReference>
<dbReference type="PANTHER" id="PTHR11063:SF8">
    <property type="entry name" value="DELTA-1-PYRROLINE-5-CARBOXYLATE SYNTHASE"/>
    <property type="match status" value="1"/>
</dbReference>
<dbReference type="PANTHER" id="PTHR11063">
    <property type="entry name" value="GLUTAMATE SEMIALDEHYDE DEHYDROGENASE"/>
    <property type="match status" value="1"/>
</dbReference>
<dbReference type="Pfam" id="PF00171">
    <property type="entry name" value="Aldedh"/>
    <property type="match status" value="1"/>
</dbReference>
<dbReference type="PIRSF" id="PIRSF000151">
    <property type="entry name" value="GPR"/>
    <property type="match status" value="1"/>
</dbReference>
<dbReference type="SUPFAM" id="SSF53720">
    <property type="entry name" value="ALDH-like"/>
    <property type="match status" value="1"/>
</dbReference>
<dbReference type="PROSITE" id="PS01223">
    <property type="entry name" value="PROA"/>
    <property type="match status" value="1"/>
</dbReference>
<proteinExistence type="inferred from homology"/>
<evidence type="ECO:0000255" key="1">
    <source>
        <dbReference type="HAMAP-Rule" id="MF_00412"/>
    </source>
</evidence>
<evidence type="ECO:0000256" key="2">
    <source>
        <dbReference type="SAM" id="MobiDB-lite"/>
    </source>
</evidence>
<gene>
    <name evidence="1" type="primary">proA</name>
    <name type="ordered locus">CE2260</name>
</gene>
<sequence length="438" mass="46362">MTAQTSSDVTDQKTDLTRESERDEVLAKATLAKKVAPEIAQLGTGVKNQILLAAAEALLERSAEIIEANSRDIAAGRESGMAESLIDRLALDEGRIEGIAGGLRQVAGLTDPVGEVLQGRVMENGIQMRQVRVPLGVMGMVYEARPNVTVDAFGLALKSGNVALLRGSSTAVHSNTTLVGILQDVLATFDLPRETVQLLPCATRESVQDLITARGLVDVVIPRGGAGLINAVVMGATVPTIETGTGNCHFYIDGDVDVDSAIAMLINGKTRRCSVCNATETALIDSALPDVDKLRVVRALQDAGVTVHGRVAELEAFGATDVVEATENDWDSEYLSFDIAVAVVDGVDAAIEHIEKYSTHHTEAIATNNVFTAQRFADHVDAAAVMINASTAFTDGEQYGMGAEIGISTQKLHARGPMALPELTSTKWILQGTGHTRP</sequence>
<accession>Q8FN87</accession>
<feature type="chain" id="PRO_0000189718" description="Gamma-glutamyl phosphate reductase">
    <location>
        <begin position="1"/>
        <end position="438"/>
    </location>
</feature>
<feature type="region of interest" description="Disordered" evidence="2">
    <location>
        <begin position="1"/>
        <end position="21"/>
    </location>
</feature>
<feature type="compositionally biased region" description="Basic and acidic residues" evidence="2">
    <location>
        <begin position="10"/>
        <end position="21"/>
    </location>
</feature>
<keyword id="KW-0028">Amino-acid biosynthesis</keyword>
<keyword id="KW-0963">Cytoplasm</keyword>
<keyword id="KW-0521">NADP</keyword>
<keyword id="KW-0560">Oxidoreductase</keyword>
<keyword id="KW-0641">Proline biosynthesis</keyword>
<keyword id="KW-1185">Reference proteome</keyword>